<name>GSA_PHOPR</name>
<accession>Q6LUS3</accession>
<gene>
    <name evidence="1" type="primary">hemL</name>
    <name type="ordered locus">PBPRA0529</name>
</gene>
<comment type="catalytic activity">
    <reaction evidence="1">
        <text>(S)-4-amino-5-oxopentanoate = 5-aminolevulinate</text>
        <dbReference type="Rhea" id="RHEA:14265"/>
        <dbReference type="ChEBI" id="CHEBI:57501"/>
        <dbReference type="ChEBI" id="CHEBI:356416"/>
        <dbReference type="EC" id="5.4.3.8"/>
    </reaction>
</comment>
<comment type="cofactor">
    <cofactor evidence="1">
        <name>pyridoxal 5'-phosphate</name>
        <dbReference type="ChEBI" id="CHEBI:597326"/>
    </cofactor>
</comment>
<comment type="pathway">
    <text evidence="1">Porphyrin-containing compound metabolism; protoporphyrin-IX biosynthesis; 5-aminolevulinate from L-glutamyl-tRNA(Glu): step 2/2.</text>
</comment>
<comment type="subunit">
    <text evidence="1">Homodimer.</text>
</comment>
<comment type="subcellular location">
    <subcellularLocation>
        <location evidence="1">Cytoplasm</location>
    </subcellularLocation>
</comment>
<comment type="similarity">
    <text evidence="1">Belongs to the class-III pyridoxal-phosphate-dependent aminotransferase family. HemL subfamily.</text>
</comment>
<sequence>MSKSADLFAKAQKIIPGGVNSPVRAFAGVGGSPLFIERADGAYIFDADGKAYIDYVGSWGPMILGHNHVAVRDAVIKAAQQGLSFGAPTEMEITMAELVSKLVPSMEQIRMVSSGTEATMSAIRLARGFTNRDKIIKFEGCYHGHADCLLVKAGSGALTLGQPNSPGVPADFAKHTLTCTYNDLETVREAFAAHPEQIACIIVEPVAGNMNCIPPVPGFLEGLRTICDDFGALLILDEVMTGFRVSEGGAQGYYNIKPDLTTLGKIIGGGMPVGAFGGRKDIMQYIAPTGPVYQAGTLSGNPVAMAAGHACLSVLTEEGNEKRLANTTKILANGFKSLADKYNIPLAINQVGGMFGFFFTEQKTVTSYADVTKCDIERFKRFFNLMLKSGVYLAPSAYEACFTSLAHGDKEIEATLNAAERAFATLAKEANA</sequence>
<feature type="chain" id="PRO_0000120431" description="Glutamate-1-semialdehyde 2,1-aminomutase">
    <location>
        <begin position="1"/>
        <end position="432"/>
    </location>
</feature>
<feature type="modified residue" description="N6-(pyridoxal phosphate)lysine" evidence="1">
    <location>
        <position position="265"/>
    </location>
</feature>
<reference key="1">
    <citation type="journal article" date="2005" name="Science">
        <title>Life at depth: Photobacterium profundum genome sequence and expression analysis.</title>
        <authorList>
            <person name="Vezzi A."/>
            <person name="Campanaro S."/>
            <person name="D'Angelo M."/>
            <person name="Simonato F."/>
            <person name="Vitulo N."/>
            <person name="Lauro F.M."/>
            <person name="Cestaro A."/>
            <person name="Malacrida G."/>
            <person name="Simionati B."/>
            <person name="Cannata N."/>
            <person name="Romualdi C."/>
            <person name="Bartlett D.H."/>
            <person name="Valle G."/>
        </authorList>
    </citation>
    <scope>NUCLEOTIDE SEQUENCE [LARGE SCALE GENOMIC DNA]</scope>
    <source>
        <strain>ATCC BAA-1253 / SS9</strain>
    </source>
</reference>
<evidence type="ECO:0000255" key="1">
    <source>
        <dbReference type="HAMAP-Rule" id="MF_00375"/>
    </source>
</evidence>
<proteinExistence type="inferred from homology"/>
<organism>
    <name type="scientific">Photobacterium profundum (strain SS9)</name>
    <dbReference type="NCBI Taxonomy" id="298386"/>
    <lineage>
        <taxon>Bacteria</taxon>
        <taxon>Pseudomonadati</taxon>
        <taxon>Pseudomonadota</taxon>
        <taxon>Gammaproteobacteria</taxon>
        <taxon>Vibrionales</taxon>
        <taxon>Vibrionaceae</taxon>
        <taxon>Photobacterium</taxon>
    </lineage>
</organism>
<dbReference type="EC" id="5.4.3.8" evidence="1"/>
<dbReference type="EMBL" id="CR378664">
    <property type="protein sequence ID" value="CAG18952.1"/>
    <property type="molecule type" value="Genomic_DNA"/>
</dbReference>
<dbReference type="RefSeq" id="WP_011217305.1">
    <property type="nucleotide sequence ID" value="NC_006370.1"/>
</dbReference>
<dbReference type="SMR" id="Q6LUS3"/>
<dbReference type="STRING" id="298386.PBPRA0529"/>
<dbReference type="KEGG" id="ppr:PBPRA0529"/>
<dbReference type="eggNOG" id="COG0001">
    <property type="taxonomic scope" value="Bacteria"/>
</dbReference>
<dbReference type="HOGENOM" id="CLU_016922_1_5_6"/>
<dbReference type="UniPathway" id="UPA00251">
    <property type="reaction ID" value="UER00317"/>
</dbReference>
<dbReference type="Proteomes" id="UP000000593">
    <property type="component" value="Chromosome 1"/>
</dbReference>
<dbReference type="GO" id="GO:0005737">
    <property type="term" value="C:cytoplasm"/>
    <property type="evidence" value="ECO:0007669"/>
    <property type="project" value="UniProtKB-SubCell"/>
</dbReference>
<dbReference type="GO" id="GO:0042286">
    <property type="term" value="F:glutamate-1-semialdehyde 2,1-aminomutase activity"/>
    <property type="evidence" value="ECO:0007669"/>
    <property type="project" value="UniProtKB-UniRule"/>
</dbReference>
<dbReference type="GO" id="GO:0030170">
    <property type="term" value="F:pyridoxal phosphate binding"/>
    <property type="evidence" value="ECO:0007669"/>
    <property type="project" value="InterPro"/>
</dbReference>
<dbReference type="GO" id="GO:0008483">
    <property type="term" value="F:transaminase activity"/>
    <property type="evidence" value="ECO:0007669"/>
    <property type="project" value="InterPro"/>
</dbReference>
<dbReference type="GO" id="GO:0006782">
    <property type="term" value="P:protoporphyrinogen IX biosynthetic process"/>
    <property type="evidence" value="ECO:0007669"/>
    <property type="project" value="UniProtKB-UniRule"/>
</dbReference>
<dbReference type="CDD" id="cd00610">
    <property type="entry name" value="OAT_like"/>
    <property type="match status" value="1"/>
</dbReference>
<dbReference type="FunFam" id="3.40.640.10:FF:000021">
    <property type="entry name" value="Glutamate-1-semialdehyde 2,1-aminomutase"/>
    <property type="match status" value="1"/>
</dbReference>
<dbReference type="Gene3D" id="3.90.1150.10">
    <property type="entry name" value="Aspartate Aminotransferase, domain 1"/>
    <property type="match status" value="1"/>
</dbReference>
<dbReference type="Gene3D" id="3.40.640.10">
    <property type="entry name" value="Type I PLP-dependent aspartate aminotransferase-like (Major domain)"/>
    <property type="match status" value="1"/>
</dbReference>
<dbReference type="HAMAP" id="MF_00375">
    <property type="entry name" value="HemL_aminotrans_3"/>
    <property type="match status" value="1"/>
</dbReference>
<dbReference type="InterPro" id="IPR004639">
    <property type="entry name" value="4pyrrol_synth_GluAld_NH2Trfase"/>
</dbReference>
<dbReference type="InterPro" id="IPR005814">
    <property type="entry name" value="Aminotrans_3"/>
</dbReference>
<dbReference type="InterPro" id="IPR049704">
    <property type="entry name" value="Aminotrans_3_PPA_site"/>
</dbReference>
<dbReference type="InterPro" id="IPR015424">
    <property type="entry name" value="PyrdxlP-dep_Trfase"/>
</dbReference>
<dbReference type="InterPro" id="IPR015421">
    <property type="entry name" value="PyrdxlP-dep_Trfase_major"/>
</dbReference>
<dbReference type="InterPro" id="IPR015422">
    <property type="entry name" value="PyrdxlP-dep_Trfase_small"/>
</dbReference>
<dbReference type="NCBIfam" id="TIGR00713">
    <property type="entry name" value="hemL"/>
    <property type="match status" value="1"/>
</dbReference>
<dbReference type="NCBIfam" id="NF000818">
    <property type="entry name" value="PRK00062.1"/>
    <property type="match status" value="1"/>
</dbReference>
<dbReference type="PANTHER" id="PTHR43713">
    <property type="entry name" value="GLUTAMATE-1-SEMIALDEHYDE 2,1-AMINOMUTASE"/>
    <property type="match status" value="1"/>
</dbReference>
<dbReference type="PANTHER" id="PTHR43713:SF3">
    <property type="entry name" value="GLUTAMATE-1-SEMIALDEHYDE 2,1-AMINOMUTASE 1, CHLOROPLASTIC-RELATED"/>
    <property type="match status" value="1"/>
</dbReference>
<dbReference type="Pfam" id="PF00202">
    <property type="entry name" value="Aminotran_3"/>
    <property type="match status" value="1"/>
</dbReference>
<dbReference type="SUPFAM" id="SSF53383">
    <property type="entry name" value="PLP-dependent transferases"/>
    <property type="match status" value="1"/>
</dbReference>
<dbReference type="PROSITE" id="PS00600">
    <property type="entry name" value="AA_TRANSFER_CLASS_3"/>
    <property type="match status" value="1"/>
</dbReference>
<keyword id="KW-0963">Cytoplasm</keyword>
<keyword id="KW-0413">Isomerase</keyword>
<keyword id="KW-0627">Porphyrin biosynthesis</keyword>
<keyword id="KW-0663">Pyridoxal phosphate</keyword>
<keyword id="KW-1185">Reference proteome</keyword>
<protein>
    <recommendedName>
        <fullName evidence="1">Glutamate-1-semialdehyde 2,1-aminomutase</fullName>
        <shortName evidence="1">GSA</shortName>
        <ecNumber evidence="1">5.4.3.8</ecNumber>
    </recommendedName>
    <alternativeName>
        <fullName evidence="1">Glutamate-1-semialdehyde aminotransferase</fullName>
        <shortName evidence="1">GSA-AT</shortName>
    </alternativeName>
</protein>